<feature type="chain" id="PRO_0000437731" description="N-methyltransferase tcpN">
    <location>
        <begin position="1"/>
        <end position="281"/>
    </location>
</feature>
<sequence>MESVVDGSSQSRHQSENDRLNIQHALIKSIMGGKLLMAPVNLERPDLRILDSGTAQANWLLDLAALVPTTAQLTGTDIAPEQFPPPSQRPPNMTLQKQSIFDPWNEAMLGSFDVVHQRFVLAACQSDEHGQRAVADLLALTKPGGWIELHEGNMLAIQEGEAHSAMMRFRDIAVAAWVSIGQVPDPGPRLTDWMRDAGVVDMHEEVQTIGLGAAARNQQEAEWSTELCLNMLRTIRRMTAGKGADAPSEQEFDTLEVALREELQEVGNQWYYYLAYGRRRT</sequence>
<evidence type="ECO:0000269" key="1">
    <source>
    </source>
</evidence>
<evidence type="ECO:0000303" key="2">
    <source>
    </source>
</evidence>
<evidence type="ECO:0000305" key="3"/>
<evidence type="ECO:0000305" key="4">
    <source>
    </source>
</evidence>
<protein>
    <recommendedName>
        <fullName evidence="2">N-methyltransferase tcpN</fullName>
        <ecNumber evidence="4">2.1.1.-</ecNumber>
    </recommendedName>
    <alternativeName>
        <fullName evidence="2">Thioclapurine biosynthesis protein N</fullName>
    </alternativeName>
</protein>
<name>TCPN_CLAP2</name>
<comment type="function">
    <text evidence="1">N-methyltransferase; part of the gene cluster that mediates the biosynthesis of an unusual class of epipolythiodioxopiperazines (ETPs) lacking the reactive thiol group important for toxicity (PubMed:27390873). Firstly, L-tyrosine is prenylated by tcpD, before undergoing condensation with L-glycine in a reaction catalyzed by the NRPS tcpP leading to the diketopiperazine (DKP) backbone (PubMed:27390873). Afterwards the alpha-carbon of tyrosine is oxidized by the cytochrome P450 tcpC to form a hydroxyl group (PubMed:27390873). However, in contrast other ETP biosynthesis pathways studied so far, tcpC is not able to bishydroxylate the DKP at both alpha-carbon positions, but hydroxylates the alpha-carbon of the tyrosine part and the nitrogen of the glycine part (PubMed:27390873). The next steps involve an alpha,beta-elimination reaction catalyzed by tcpI, a methylation by the methyltransferase tcpN the action of the four enzyme cascade tcpG/K/J/I (PubMed:27390873). Due to a dysfunctional cytochrome P450 monooxygenase tcpC, the pathway leads to the biosynthesis of probable non-toxic metabolites lacking the reactive thiol group (PubMed:27390873).</text>
</comment>
<comment type="pathway">
    <text evidence="4">Secondary metabolite biosynthesis.</text>
</comment>
<comment type="induction">
    <text evidence="1">Expression is positively regulated by the thioclapurine cluster-specific transcription factor tcpZ (PubMed:27390873).</text>
</comment>
<comment type="similarity">
    <text evidence="3">Belongs to the methyltransferase superfamily. LaeA methyltransferase family.</text>
</comment>
<keyword id="KW-0489">Methyltransferase</keyword>
<keyword id="KW-1185">Reference proteome</keyword>
<keyword id="KW-0949">S-adenosyl-L-methionine</keyword>
<keyword id="KW-0808">Transferase</keyword>
<proteinExistence type="evidence at transcript level"/>
<gene>
    <name evidence="2" type="primary">tcpN</name>
    <name type="ORF">CPUR_02672</name>
</gene>
<accession>M1W079</accession>
<organism>
    <name type="scientific">Claviceps purpurea (strain 20.1)</name>
    <name type="common">Ergot fungus</name>
    <name type="synonym">Sphacelia segetum</name>
    <dbReference type="NCBI Taxonomy" id="1111077"/>
    <lineage>
        <taxon>Eukaryota</taxon>
        <taxon>Fungi</taxon>
        <taxon>Dikarya</taxon>
        <taxon>Ascomycota</taxon>
        <taxon>Pezizomycotina</taxon>
        <taxon>Sordariomycetes</taxon>
        <taxon>Hypocreomycetidae</taxon>
        <taxon>Hypocreales</taxon>
        <taxon>Clavicipitaceae</taxon>
        <taxon>Claviceps</taxon>
    </lineage>
</organism>
<reference key="1">
    <citation type="journal article" date="2013" name="PLoS Genet.">
        <title>Plant-symbiotic fungi as chemical engineers: Multi-genome analysis of the Clavicipitaceae reveals dynamics of alkaloid loci.</title>
        <authorList>
            <person name="Schardl C.L."/>
            <person name="Young C.A."/>
            <person name="Hesse U."/>
            <person name="Amyotte S.G."/>
            <person name="Andreeva K."/>
            <person name="Calie P.J."/>
            <person name="Fleetwood D.J."/>
            <person name="Haws D.C."/>
            <person name="Moore N."/>
            <person name="Oeser B."/>
            <person name="Panaccione D.G."/>
            <person name="Schweri K.K."/>
            <person name="Voisey C.R."/>
            <person name="Farman M.L."/>
            <person name="Jaromczyk J.W."/>
            <person name="Roe B.A."/>
            <person name="O'Sullivan D.M."/>
            <person name="Scott B."/>
            <person name="Tudzynski P."/>
            <person name="An Z."/>
            <person name="Arnaoudova E.G."/>
            <person name="Bullock C.T."/>
            <person name="Charlton N.D."/>
            <person name="Chen L."/>
            <person name="Cox M."/>
            <person name="Dinkins R.D."/>
            <person name="Florea S."/>
            <person name="Glenn A.E."/>
            <person name="Gordon A."/>
            <person name="Gueldener U."/>
            <person name="Harris D.R."/>
            <person name="Hollin W."/>
            <person name="Jaromczyk J."/>
            <person name="Johnson R.D."/>
            <person name="Khan A.K."/>
            <person name="Leistner E."/>
            <person name="Leuchtmann A."/>
            <person name="Li C."/>
            <person name="Liu J."/>
            <person name="Liu J."/>
            <person name="Liu M."/>
            <person name="Mace W."/>
            <person name="Machado C."/>
            <person name="Nagabhyru P."/>
            <person name="Pan J."/>
            <person name="Schmid J."/>
            <person name="Sugawara K."/>
            <person name="Steiner U."/>
            <person name="Takach J.E."/>
            <person name="Tanaka E."/>
            <person name="Webb J.S."/>
            <person name="Wilson E.V."/>
            <person name="Wiseman J.L."/>
            <person name="Yoshida R."/>
            <person name="Zeng Z."/>
        </authorList>
    </citation>
    <scope>NUCLEOTIDE SEQUENCE [LARGE SCALE GENOMIC DNA]</scope>
    <source>
        <strain>20.1</strain>
    </source>
</reference>
<reference key="2">
    <citation type="journal article" date="2016" name="PLoS ONE">
        <title>The epipolythiodiketopiperazine gene cluster in Claviceps purpurea: dysfunctional cytochrome P450 enzyme prevents formation of the previously unknown clapurines.</title>
        <authorList>
            <person name="Dopstadt J."/>
            <person name="Neubauer L."/>
            <person name="Tudzynski P."/>
            <person name="Humpf H.U."/>
        </authorList>
    </citation>
    <scope>FUNCTION</scope>
    <scope>INDUCTION</scope>
</reference>
<dbReference type="EC" id="2.1.1.-" evidence="4"/>
<dbReference type="EMBL" id="CAGA01000011">
    <property type="protein sequence ID" value="CCE28981.1"/>
    <property type="molecule type" value="Genomic_DNA"/>
</dbReference>
<dbReference type="SMR" id="M1W079"/>
<dbReference type="STRING" id="1111077.M1W079"/>
<dbReference type="VEuPathDB" id="FungiDB:CPUR_02672"/>
<dbReference type="eggNOG" id="ENOG502SIG3">
    <property type="taxonomic scope" value="Eukaryota"/>
</dbReference>
<dbReference type="HOGENOM" id="CLU_010595_9_3_1"/>
<dbReference type="OrthoDB" id="184880at2759"/>
<dbReference type="Proteomes" id="UP000016801">
    <property type="component" value="Unassembled WGS sequence"/>
</dbReference>
<dbReference type="GO" id="GO:0008168">
    <property type="term" value="F:methyltransferase activity"/>
    <property type="evidence" value="ECO:0007669"/>
    <property type="project" value="UniProtKB-KW"/>
</dbReference>
<dbReference type="GO" id="GO:0032259">
    <property type="term" value="P:methylation"/>
    <property type="evidence" value="ECO:0007669"/>
    <property type="project" value="UniProtKB-KW"/>
</dbReference>
<dbReference type="Gene3D" id="3.40.50.150">
    <property type="entry name" value="Vaccinia Virus protein VP39"/>
    <property type="match status" value="1"/>
</dbReference>
<dbReference type="InterPro" id="IPR029063">
    <property type="entry name" value="SAM-dependent_MTases_sf"/>
</dbReference>
<dbReference type="Pfam" id="PF13489">
    <property type="entry name" value="Methyltransf_23"/>
    <property type="match status" value="1"/>
</dbReference>
<dbReference type="SUPFAM" id="SSF53335">
    <property type="entry name" value="S-adenosyl-L-methionine-dependent methyltransferases"/>
    <property type="match status" value="1"/>
</dbReference>